<proteinExistence type="evidence at transcript level"/>
<accession>Q06060</accession>
<reference key="1">
    <citation type="journal article" date="1993" name="Plant Mol. Biol.">
        <title>Molecular cloning and expression of a MAP kinase homologue from pea.</title>
        <authorList>
            <person name="Stafstrom J.P."/>
            <person name="Altschuler M."/>
            <person name="Anderson D.H."/>
        </authorList>
    </citation>
    <scope>NUCLEOTIDE SEQUENCE [MRNA]</scope>
    <source>
        <strain>cv. Alaska</strain>
        <tissue>Seedling</tissue>
    </source>
</reference>
<keyword id="KW-0067">ATP-binding</keyword>
<keyword id="KW-0131">Cell cycle</keyword>
<keyword id="KW-0418">Kinase</keyword>
<keyword id="KW-0547">Nucleotide-binding</keyword>
<keyword id="KW-0597">Phosphoprotein</keyword>
<keyword id="KW-0723">Serine/threonine-protein kinase</keyword>
<keyword id="KW-0808">Transferase</keyword>
<protein>
    <recommendedName>
        <fullName>Mitogen-activated protein kinase homolog D5</fullName>
        <ecNumber>2.7.11.24</ecNumber>
    </recommendedName>
</protein>
<feature type="chain" id="PRO_0000186319" description="Mitogen-activated protein kinase homolog D5">
    <location>
        <begin position="1"/>
        <end position="394"/>
    </location>
</feature>
<feature type="domain" description="Protein kinase" evidence="2">
    <location>
        <begin position="62"/>
        <end position="347"/>
    </location>
</feature>
<feature type="short sequence motif" description="TXY">
    <location>
        <begin position="220"/>
        <end position="222"/>
    </location>
</feature>
<feature type="active site" description="Proton acceptor" evidence="2 3">
    <location>
        <position position="188"/>
    </location>
</feature>
<feature type="binding site" evidence="2">
    <location>
        <begin position="68"/>
        <end position="76"/>
    </location>
    <ligand>
        <name>ATP</name>
        <dbReference type="ChEBI" id="CHEBI:30616"/>
    </ligand>
</feature>
<feature type="binding site" evidence="2">
    <location>
        <position position="91"/>
    </location>
    <ligand>
        <name>ATP</name>
        <dbReference type="ChEBI" id="CHEBI:30616"/>
    </ligand>
</feature>
<feature type="modified residue" description="Phosphothreonine" evidence="1">
    <location>
        <position position="220"/>
    </location>
</feature>
<feature type="modified residue" description="Phosphotyrosine" evidence="1">
    <location>
        <position position="222"/>
    </location>
</feature>
<organism>
    <name type="scientific">Pisum sativum</name>
    <name type="common">Garden pea</name>
    <name type="synonym">Lathyrus oleraceus</name>
    <dbReference type="NCBI Taxonomy" id="3888"/>
    <lineage>
        <taxon>Eukaryota</taxon>
        <taxon>Viridiplantae</taxon>
        <taxon>Streptophyta</taxon>
        <taxon>Embryophyta</taxon>
        <taxon>Tracheophyta</taxon>
        <taxon>Spermatophyta</taxon>
        <taxon>Magnoliopsida</taxon>
        <taxon>eudicotyledons</taxon>
        <taxon>Gunneridae</taxon>
        <taxon>Pentapetalae</taxon>
        <taxon>rosids</taxon>
        <taxon>fabids</taxon>
        <taxon>Fabales</taxon>
        <taxon>Fabaceae</taxon>
        <taxon>Papilionoideae</taxon>
        <taxon>50 kb inversion clade</taxon>
        <taxon>NPAAA clade</taxon>
        <taxon>Hologalegina</taxon>
        <taxon>IRL clade</taxon>
        <taxon>Fabeae</taxon>
        <taxon>Pisum</taxon>
    </lineage>
</organism>
<sequence>MEGGGGAPAADAVMEDAAPQQQEPQQQAAMGIENIPATLSHGGRFIQYNIFGNIFEVTAKYRPPIMPIGKGAYGIVCSAHNSETNEHVAVKKIANAFDNKIDAKRTLREIKLVRHMDHENVVAIRDIVPPPQREVFNDVYIAYELMDTDLHQIIRSNQALSEEHCQYFLYQILRGLKYIHSANVLHRDLKPSNLLLNANCDLKICDFGLARVTSETDFMTEYVVTRWYRAPELLLNSSDYTAAIDVWSVGCIFMELMDRKPLFPGRDHVHQLRLLMELIGTPSEADLGFLNENAKRYIRQLPLYRRQSFQEKFPHVHPEAIDLVEKMLTFDPRQRITVENALAHPYLTSLHDISDEPVCTTPFSFDFEQHALTEEQMKELIYREALAFNPEYQQ</sequence>
<evidence type="ECO:0000250" key="1"/>
<evidence type="ECO:0000255" key="2">
    <source>
        <dbReference type="PROSITE-ProRule" id="PRU00159"/>
    </source>
</evidence>
<evidence type="ECO:0000255" key="3">
    <source>
        <dbReference type="PROSITE-ProRule" id="PRU10027"/>
    </source>
</evidence>
<evidence type="ECO:0000305" key="4"/>
<name>MPK_PEA</name>
<comment type="catalytic activity">
    <reaction>
        <text>L-seryl-[protein] + ATP = O-phospho-L-seryl-[protein] + ADP + H(+)</text>
        <dbReference type="Rhea" id="RHEA:17989"/>
        <dbReference type="Rhea" id="RHEA-COMP:9863"/>
        <dbReference type="Rhea" id="RHEA-COMP:11604"/>
        <dbReference type="ChEBI" id="CHEBI:15378"/>
        <dbReference type="ChEBI" id="CHEBI:29999"/>
        <dbReference type="ChEBI" id="CHEBI:30616"/>
        <dbReference type="ChEBI" id="CHEBI:83421"/>
        <dbReference type="ChEBI" id="CHEBI:456216"/>
        <dbReference type="EC" id="2.7.11.24"/>
    </reaction>
</comment>
<comment type="catalytic activity">
    <reaction>
        <text>L-threonyl-[protein] + ATP = O-phospho-L-threonyl-[protein] + ADP + H(+)</text>
        <dbReference type="Rhea" id="RHEA:46608"/>
        <dbReference type="Rhea" id="RHEA-COMP:11060"/>
        <dbReference type="Rhea" id="RHEA-COMP:11605"/>
        <dbReference type="ChEBI" id="CHEBI:15378"/>
        <dbReference type="ChEBI" id="CHEBI:30013"/>
        <dbReference type="ChEBI" id="CHEBI:30616"/>
        <dbReference type="ChEBI" id="CHEBI:61977"/>
        <dbReference type="ChEBI" id="CHEBI:456216"/>
        <dbReference type="EC" id="2.7.11.24"/>
    </reaction>
</comment>
<comment type="cofactor">
    <cofactor evidence="1">
        <name>Mg(2+)</name>
        <dbReference type="ChEBI" id="CHEBI:18420"/>
    </cofactor>
</comment>
<comment type="activity regulation">
    <text evidence="1">Activated by tyrosine and threonine phosphorylation.</text>
</comment>
<comment type="tissue specificity">
    <text>Leaves, roots, root apices, and dormant and growing axillary buds.</text>
</comment>
<comment type="domain">
    <text>The TXY motif contains the threonine and tyrosine residues whose phosphorylation activates the MAP kinases.</text>
</comment>
<comment type="PTM">
    <text evidence="1">Dually phosphorylated on Thr-220 and Tyr-222, which activates the enzyme.</text>
</comment>
<comment type="similarity">
    <text evidence="4">Belongs to the protein kinase superfamily. CMGC Ser/Thr protein kinase family. MAP kinase subfamily.</text>
</comment>
<comment type="caution">
    <text evidence="4">It is uncertain whether Met-1, Met-14 or Met-30 is the initiator.</text>
</comment>
<dbReference type="EC" id="2.7.11.24"/>
<dbReference type="EMBL" id="X70703">
    <property type="protein sequence ID" value="CAA50036.1"/>
    <property type="molecule type" value="mRNA"/>
</dbReference>
<dbReference type="PIR" id="S33635">
    <property type="entry name" value="S33635"/>
</dbReference>
<dbReference type="SMR" id="Q06060"/>
<dbReference type="BRENDA" id="2.7.11.24">
    <property type="organism ID" value="4872"/>
</dbReference>
<dbReference type="GO" id="GO:0005524">
    <property type="term" value="F:ATP binding"/>
    <property type="evidence" value="ECO:0007669"/>
    <property type="project" value="UniProtKB-KW"/>
</dbReference>
<dbReference type="GO" id="GO:0004707">
    <property type="term" value="F:MAP kinase activity"/>
    <property type="evidence" value="ECO:0007669"/>
    <property type="project" value="UniProtKB-EC"/>
</dbReference>
<dbReference type="GO" id="GO:0106310">
    <property type="term" value="F:protein serine kinase activity"/>
    <property type="evidence" value="ECO:0007669"/>
    <property type="project" value="RHEA"/>
</dbReference>
<dbReference type="CDD" id="cd07858">
    <property type="entry name" value="STKc_TEY_MAPK"/>
    <property type="match status" value="1"/>
</dbReference>
<dbReference type="FunFam" id="1.10.510.10:FF:000013">
    <property type="entry name" value="Mitogen-activated protein kinase"/>
    <property type="match status" value="1"/>
</dbReference>
<dbReference type="FunFam" id="3.30.200.20:FF:000046">
    <property type="entry name" value="Mitogen-activated protein kinase"/>
    <property type="match status" value="1"/>
</dbReference>
<dbReference type="Gene3D" id="3.30.200.20">
    <property type="entry name" value="Phosphorylase Kinase, domain 1"/>
    <property type="match status" value="1"/>
</dbReference>
<dbReference type="Gene3D" id="1.10.510.10">
    <property type="entry name" value="Transferase(Phosphotransferase) domain 1"/>
    <property type="match status" value="1"/>
</dbReference>
<dbReference type="InterPro" id="IPR011009">
    <property type="entry name" value="Kinase-like_dom_sf"/>
</dbReference>
<dbReference type="InterPro" id="IPR050117">
    <property type="entry name" value="MAP_kinase"/>
</dbReference>
<dbReference type="InterPro" id="IPR003527">
    <property type="entry name" value="MAP_kinase_CS"/>
</dbReference>
<dbReference type="InterPro" id="IPR000719">
    <property type="entry name" value="Prot_kinase_dom"/>
</dbReference>
<dbReference type="InterPro" id="IPR017441">
    <property type="entry name" value="Protein_kinase_ATP_BS"/>
</dbReference>
<dbReference type="InterPro" id="IPR008271">
    <property type="entry name" value="Ser/Thr_kinase_AS"/>
</dbReference>
<dbReference type="PANTHER" id="PTHR24055">
    <property type="entry name" value="MITOGEN-ACTIVATED PROTEIN KINASE"/>
    <property type="match status" value="1"/>
</dbReference>
<dbReference type="Pfam" id="PF00069">
    <property type="entry name" value="Pkinase"/>
    <property type="match status" value="1"/>
</dbReference>
<dbReference type="SMART" id="SM00220">
    <property type="entry name" value="S_TKc"/>
    <property type="match status" value="1"/>
</dbReference>
<dbReference type="SUPFAM" id="SSF56112">
    <property type="entry name" value="Protein kinase-like (PK-like)"/>
    <property type="match status" value="1"/>
</dbReference>
<dbReference type="PROSITE" id="PS01351">
    <property type="entry name" value="MAPK"/>
    <property type="match status" value="1"/>
</dbReference>
<dbReference type="PROSITE" id="PS00107">
    <property type="entry name" value="PROTEIN_KINASE_ATP"/>
    <property type="match status" value="1"/>
</dbReference>
<dbReference type="PROSITE" id="PS50011">
    <property type="entry name" value="PROTEIN_KINASE_DOM"/>
    <property type="match status" value="1"/>
</dbReference>
<dbReference type="PROSITE" id="PS00108">
    <property type="entry name" value="PROTEIN_KINASE_ST"/>
    <property type="match status" value="1"/>
</dbReference>